<proteinExistence type="inferred from homology"/>
<sequence>MANKPSAEELKKNLSEMQFYVTQNHGTEPPFTGRLLHNKRDGVYHCLICDAPLFHSETKYDSGCGWPSFYEPVSEESIRYIKDLSHGMQRIEIRCGNCDAHLGHVFPDGPQPTGERYCVNSASLRFTDGENGEEING</sequence>
<reference key="1">
    <citation type="journal article" date="2008" name="J. Bacteriol.">
        <title>The pangenome structure of Escherichia coli: comparative genomic analysis of E. coli commensal and pathogenic isolates.</title>
        <authorList>
            <person name="Rasko D.A."/>
            <person name="Rosovitz M.J."/>
            <person name="Myers G.S.A."/>
            <person name="Mongodin E.F."/>
            <person name="Fricke W.F."/>
            <person name="Gajer P."/>
            <person name="Crabtree J."/>
            <person name="Sebaihia M."/>
            <person name="Thomson N.R."/>
            <person name="Chaudhuri R."/>
            <person name="Henderson I.R."/>
            <person name="Sperandio V."/>
            <person name="Ravel J."/>
        </authorList>
    </citation>
    <scope>NUCLEOTIDE SEQUENCE [LARGE SCALE GENOMIC DNA]</scope>
    <source>
        <strain>HS</strain>
    </source>
</reference>
<comment type="catalytic activity">
    <reaction evidence="2">
        <text>L-methionyl-[protein] + [thioredoxin]-disulfide + H2O = L-methionyl-(R)-S-oxide-[protein] + [thioredoxin]-dithiol</text>
        <dbReference type="Rhea" id="RHEA:24164"/>
        <dbReference type="Rhea" id="RHEA-COMP:10698"/>
        <dbReference type="Rhea" id="RHEA-COMP:10700"/>
        <dbReference type="Rhea" id="RHEA-COMP:12313"/>
        <dbReference type="Rhea" id="RHEA-COMP:12314"/>
        <dbReference type="ChEBI" id="CHEBI:15377"/>
        <dbReference type="ChEBI" id="CHEBI:16044"/>
        <dbReference type="ChEBI" id="CHEBI:29950"/>
        <dbReference type="ChEBI" id="CHEBI:45764"/>
        <dbReference type="ChEBI" id="CHEBI:50058"/>
        <dbReference type="EC" id="1.8.4.12"/>
    </reaction>
</comment>
<comment type="cofactor">
    <cofactor evidence="2">
        <name>Zn(2+)</name>
        <dbReference type="ChEBI" id="CHEBI:29105"/>
    </cofactor>
    <text evidence="2">Binds 1 zinc ion per subunit. The zinc ion is important for the structural integrity of the protein.</text>
</comment>
<comment type="similarity">
    <text evidence="2">Belongs to the MsrB Met sulfoxide reductase family.</text>
</comment>
<gene>
    <name evidence="2" type="primary">msrB</name>
    <name type="ordered locus">EcHS_A1863</name>
</gene>
<feature type="initiator methionine" description="Removed" evidence="1">
    <location>
        <position position="1"/>
    </location>
</feature>
<feature type="chain" id="PRO_1000068270" description="Peptide methionine sulfoxide reductase MsrB">
    <location>
        <begin position="2"/>
        <end position="137"/>
    </location>
</feature>
<feature type="domain" description="MsrB" evidence="3">
    <location>
        <begin position="7"/>
        <end position="129"/>
    </location>
</feature>
<feature type="active site" description="Nucleophile" evidence="3">
    <location>
        <position position="118"/>
    </location>
</feature>
<feature type="binding site" evidence="3">
    <location>
        <position position="46"/>
    </location>
    <ligand>
        <name>Zn(2+)</name>
        <dbReference type="ChEBI" id="CHEBI:29105"/>
    </ligand>
</feature>
<feature type="binding site" evidence="3">
    <location>
        <position position="49"/>
    </location>
    <ligand>
        <name>Zn(2+)</name>
        <dbReference type="ChEBI" id="CHEBI:29105"/>
    </ligand>
</feature>
<feature type="binding site" evidence="3">
    <location>
        <position position="95"/>
    </location>
    <ligand>
        <name>Zn(2+)</name>
        <dbReference type="ChEBI" id="CHEBI:29105"/>
    </ligand>
</feature>
<feature type="binding site" evidence="3">
    <location>
        <position position="98"/>
    </location>
    <ligand>
        <name>Zn(2+)</name>
        <dbReference type="ChEBI" id="CHEBI:29105"/>
    </ligand>
</feature>
<name>MSRB_ECOHS</name>
<accession>A8A0X0</accession>
<organism>
    <name type="scientific">Escherichia coli O9:H4 (strain HS)</name>
    <dbReference type="NCBI Taxonomy" id="331112"/>
    <lineage>
        <taxon>Bacteria</taxon>
        <taxon>Pseudomonadati</taxon>
        <taxon>Pseudomonadota</taxon>
        <taxon>Gammaproteobacteria</taxon>
        <taxon>Enterobacterales</taxon>
        <taxon>Enterobacteriaceae</taxon>
        <taxon>Escherichia</taxon>
    </lineage>
</organism>
<evidence type="ECO:0000250" key="1"/>
<evidence type="ECO:0000255" key="2">
    <source>
        <dbReference type="HAMAP-Rule" id="MF_01400"/>
    </source>
</evidence>
<evidence type="ECO:0000255" key="3">
    <source>
        <dbReference type="PROSITE-ProRule" id="PRU01126"/>
    </source>
</evidence>
<keyword id="KW-0479">Metal-binding</keyword>
<keyword id="KW-0560">Oxidoreductase</keyword>
<keyword id="KW-0862">Zinc</keyword>
<protein>
    <recommendedName>
        <fullName evidence="2">Peptide methionine sulfoxide reductase MsrB</fullName>
        <ecNumber evidence="2">1.8.4.12</ecNumber>
    </recommendedName>
    <alternativeName>
        <fullName evidence="2">Peptide-methionine (R)-S-oxide reductase</fullName>
    </alternativeName>
</protein>
<dbReference type="EC" id="1.8.4.12" evidence="2"/>
<dbReference type="EMBL" id="CP000802">
    <property type="protein sequence ID" value="ABV06174.1"/>
    <property type="molecule type" value="Genomic_DNA"/>
</dbReference>
<dbReference type="RefSeq" id="WP_001284613.1">
    <property type="nucleotide sequence ID" value="NC_009800.1"/>
</dbReference>
<dbReference type="SMR" id="A8A0X0"/>
<dbReference type="KEGG" id="ecx:EcHS_A1863"/>
<dbReference type="HOGENOM" id="CLU_031040_8_5_6"/>
<dbReference type="GO" id="GO:0005737">
    <property type="term" value="C:cytoplasm"/>
    <property type="evidence" value="ECO:0007669"/>
    <property type="project" value="TreeGrafter"/>
</dbReference>
<dbReference type="GO" id="GO:0033743">
    <property type="term" value="F:peptide-methionine (R)-S-oxide reductase activity"/>
    <property type="evidence" value="ECO:0007669"/>
    <property type="project" value="UniProtKB-UniRule"/>
</dbReference>
<dbReference type="GO" id="GO:0008270">
    <property type="term" value="F:zinc ion binding"/>
    <property type="evidence" value="ECO:0007669"/>
    <property type="project" value="UniProtKB-UniRule"/>
</dbReference>
<dbReference type="GO" id="GO:0030091">
    <property type="term" value="P:protein repair"/>
    <property type="evidence" value="ECO:0007669"/>
    <property type="project" value="InterPro"/>
</dbReference>
<dbReference type="GO" id="GO:0006979">
    <property type="term" value="P:response to oxidative stress"/>
    <property type="evidence" value="ECO:0007669"/>
    <property type="project" value="InterPro"/>
</dbReference>
<dbReference type="FunFam" id="2.170.150.20:FF:000001">
    <property type="entry name" value="Peptide methionine sulfoxide reductase MsrB"/>
    <property type="match status" value="1"/>
</dbReference>
<dbReference type="Gene3D" id="2.170.150.20">
    <property type="entry name" value="Peptide methionine sulfoxide reductase"/>
    <property type="match status" value="1"/>
</dbReference>
<dbReference type="HAMAP" id="MF_01400">
    <property type="entry name" value="MsrB"/>
    <property type="match status" value="1"/>
</dbReference>
<dbReference type="InterPro" id="IPR028427">
    <property type="entry name" value="Met_Sox_Rdtase_MsrB"/>
</dbReference>
<dbReference type="InterPro" id="IPR002579">
    <property type="entry name" value="Met_Sox_Rdtase_MsrB_dom"/>
</dbReference>
<dbReference type="InterPro" id="IPR011057">
    <property type="entry name" value="Mss4-like_sf"/>
</dbReference>
<dbReference type="NCBIfam" id="TIGR00357">
    <property type="entry name" value="peptide-methionine (R)-S-oxide reductase MsrB"/>
    <property type="match status" value="1"/>
</dbReference>
<dbReference type="PANTHER" id="PTHR10173">
    <property type="entry name" value="METHIONINE SULFOXIDE REDUCTASE"/>
    <property type="match status" value="1"/>
</dbReference>
<dbReference type="PANTHER" id="PTHR10173:SF52">
    <property type="entry name" value="METHIONINE-R-SULFOXIDE REDUCTASE B1"/>
    <property type="match status" value="1"/>
</dbReference>
<dbReference type="Pfam" id="PF01641">
    <property type="entry name" value="SelR"/>
    <property type="match status" value="1"/>
</dbReference>
<dbReference type="SUPFAM" id="SSF51316">
    <property type="entry name" value="Mss4-like"/>
    <property type="match status" value="1"/>
</dbReference>
<dbReference type="PROSITE" id="PS51790">
    <property type="entry name" value="MSRB"/>
    <property type="match status" value="1"/>
</dbReference>